<protein>
    <recommendedName>
        <fullName evidence="1">Membrane protein</fullName>
        <shortName evidence="1">M protein</shortName>
    </recommendedName>
    <alternativeName>
        <fullName evidence="1">E1 glycoprotein</fullName>
    </alternativeName>
    <alternativeName>
        <fullName evidence="1">Matrix glycoprotein</fullName>
    </alternativeName>
    <alternativeName>
        <fullName evidence="1">Membrane glycoprotein</fullName>
    </alternativeName>
</protein>
<dbReference type="EMBL" id="X00509">
    <property type="protein sequence ID" value="CAA25197.1"/>
    <property type="molecule type" value="Genomic_RNA"/>
</dbReference>
<dbReference type="EMBL" id="M25894">
    <property type="protein sequence ID" value="AAA46452.1"/>
    <property type="molecule type" value="Genomic_RNA"/>
</dbReference>
<dbReference type="EMBL" id="AF029248">
    <property type="protein sequence ID" value="AAB86822.1"/>
    <property type="molecule type" value="Genomic_RNA"/>
</dbReference>
<dbReference type="PIR" id="A04020">
    <property type="entry name" value="VGIHE1"/>
</dbReference>
<dbReference type="RefSeq" id="NP_045301.1">
    <property type="nucleotide sequence ID" value="NC_001846.1"/>
</dbReference>
<dbReference type="SMR" id="P03415"/>
<dbReference type="GlyConnect" id="123">
    <property type="glycosylation" value="6 O-Linked glycans"/>
</dbReference>
<dbReference type="GlyCosmos" id="P03415">
    <property type="glycosylation" value="No site information, 8 glycans"/>
</dbReference>
<dbReference type="GeneID" id="1489756"/>
<dbReference type="KEGG" id="vg:1489756"/>
<dbReference type="Proteomes" id="UP000007192">
    <property type="component" value="Segment"/>
</dbReference>
<dbReference type="GO" id="GO:0044177">
    <property type="term" value="C:host cell Golgi apparatus"/>
    <property type="evidence" value="ECO:0000314"/>
    <property type="project" value="CACAO"/>
</dbReference>
<dbReference type="GO" id="GO:0044178">
    <property type="term" value="C:host cell Golgi membrane"/>
    <property type="evidence" value="ECO:0007669"/>
    <property type="project" value="UniProtKB-SubCell"/>
</dbReference>
<dbReference type="GO" id="GO:0016020">
    <property type="term" value="C:membrane"/>
    <property type="evidence" value="ECO:0007669"/>
    <property type="project" value="UniProtKB-UniRule"/>
</dbReference>
<dbReference type="GO" id="GO:0019031">
    <property type="term" value="C:viral envelope"/>
    <property type="evidence" value="ECO:0007669"/>
    <property type="project" value="UniProtKB-UniRule"/>
</dbReference>
<dbReference type="GO" id="GO:0055036">
    <property type="term" value="C:virion membrane"/>
    <property type="evidence" value="ECO:0007669"/>
    <property type="project" value="UniProtKB-SubCell"/>
</dbReference>
<dbReference type="GO" id="GO:0039660">
    <property type="term" value="F:structural constituent of virion"/>
    <property type="evidence" value="ECO:0007669"/>
    <property type="project" value="UniProtKB-UniRule"/>
</dbReference>
<dbReference type="CDD" id="cd21568">
    <property type="entry name" value="HCoV-like_M"/>
    <property type="match status" value="1"/>
</dbReference>
<dbReference type="HAMAP" id="MF_04202">
    <property type="entry name" value="BETA_CORONA_M"/>
    <property type="match status" value="1"/>
</dbReference>
<dbReference type="InterPro" id="IPR002574">
    <property type="entry name" value="M_CoV"/>
</dbReference>
<dbReference type="InterPro" id="IPR044362">
    <property type="entry name" value="M_HCoV-like"/>
</dbReference>
<dbReference type="Pfam" id="PF01635">
    <property type="entry name" value="CoV_M"/>
    <property type="match status" value="1"/>
</dbReference>
<dbReference type="PROSITE" id="PS51927">
    <property type="entry name" value="COV_M"/>
    <property type="match status" value="1"/>
</dbReference>
<keyword id="KW-0325">Glycoprotein</keyword>
<keyword id="KW-1040">Host Golgi apparatus</keyword>
<keyword id="KW-1043">Host membrane</keyword>
<keyword id="KW-0945">Host-virus interaction</keyword>
<keyword id="KW-0472">Membrane</keyword>
<keyword id="KW-1185">Reference proteome</keyword>
<keyword id="KW-0812">Transmembrane</keyword>
<keyword id="KW-1133">Transmembrane helix</keyword>
<keyword id="KW-0261">Viral envelope protein</keyword>
<keyword id="KW-0899">Viral immunoevasion</keyword>
<keyword id="KW-0468">Viral matrix protein</keyword>
<keyword id="KW-0946">Virion</keyword>
<comment type="function">
    <text evidence="1 2">Component of the viral envelope that plays a central role in virus morphogenesis and assembly via its interactions with other viral proteins.</text>
</comment>
<comment type="subunit">
    <text evidence="1 2">Homomultimer. Interacts with envelope E protein in the budding compartment of the host cell, which is located between endoplasmic reticulum and the Golgi complex. Forms a complex with HE and S proteins. Interacts with nucleocapsid N protein. This interaction probably participates in RNA packaging into the virus.</text>
</comment>
<comment type="subcellular location">
    <subcellularLocation>
        <location evidence="1">Virion membrane</location>
        <topology evidence="1">Multi-pass membrane protein</topology>
    </subcellularLocation>
    <subcellularLocation>
        <location evidence="1">Host Golgi apparatus membrane</location>
        <topology evidence="1">Multi-pass membrane protein</topology>
    </subcellularLocation>
    <text evidence="1">Largely embedded in the lipid bilayer.</text>
</comment>
<comment type="PTM">
    <text>O-linked glycans consist of Gal-GalNAc disaccharides which are modified with up to 2 sialic acid residues (done in recombinantly expressed E1 glycoprotein in SAC(-) cells infected with recombinant vaccinia vector).</text>
</comment>
<comment type="similarity">
    <text evidence="1">Belongs to the betacoronaviruses M protein family.</text>
</comment>
<sequence>MSSTTQAPEPVYQWTADEAVQFLKEWNFSLGIILLFITIILQFGYTSRSMFIYVVKMIILWLMWPLTIVLCIFNCVYALNNVYLGFSIVFTIVSIVIWIMYFVNSIRLFIRTGSWWSFNPETNNLMCIDMKGTVYVRPIIEDYHTLTATIIRGHLYMQGVKLGTGFSLSDLPAYVTVAKVSHLCTYKRAFLDKVDGVSGFAVYVKSKVGNYRLPSNKPSGADTALLRI</sequence>
<feature type="chain" id="PRO_0000106037" description="Membrane protein">
    <location>
        <begin position="1"/>
        <end position="228"/>
    </location>
</feature>
<feature type="topological domain" description="Virion surface" evidence="1">
    <location>
        <begin position="2"/>
        <end position="25"/>
    </location>
</feature>
<feature type="transmembrane region" description="Helical" evidence="1">
    <location>
        <begin position="26"/>
        <end position="46"/>
    </location>
</feature>
<feature type="topological domain" description="Intravirion" evidence="1">
    <location>
        <begin position="47"/>
        <end position="56"/>
    </location>
</feature>
<feature type="transmembrane region" description="Helical" evidence="1">
    <location>
        <begin position="57"/>
        <end position="77"/>
    </location>
</feature>
<feature type="topological domain" description="Virion surface" evidence="1">
    <location>
        <begin position="78"/>
        <end position="85"/>
    </location>
</feature>
<feature type="transmembrane region" description="Helical" evidence="1">
    <location>
        <begin position="86"/>
        <end position="106"/>
    </location>
</feature>
<feature type="topological domain" description="Intravirion" evidence="1">
    <location>
        <begin position="107"/>
        <end position="228"/>
    </location>
</feature>
<feature type="mutagenesis site" description="Does not affect the ability to interact with itself." evidence="4">
    <original>SS</original>
    <variation>AA</variation>
    <location>
        <begin position="2"/>
        <end position="3"/>
    </location>
</feature>
<feature type="mutagenesis site" description="Abolishes the ability to form virus-like particles. Does not abolish the interaction with S protein." evidence="3">
    <original>Y</original>
    <variation>G</variation>
    <location>
        <position position="211"/>
    </location>
</feature>
<feature type="mutagenesis site" description="Does not affect the ability to interact with itself." evidence="4">
    <original>LL</original>
    <variation>KK</variation>
    <location>
        <begin position="225"/>
        <end position="226"/>
    </location>
</feature>
<name>VME1_CVMA5</name>
<accession>P03415</accession>
<proteinExistence type="evidence at protein level"/>
<reference key="1">
    <citation type="journal article" date="1984" name="Nature">
        <title>Sequence and topology of a model intracellular membrane protein, E1 glycoprotein, from a coronavirus.</title>
        <authorList>
            <person name="Armstrong J."/>
            <person name="Niemann H."/>
            <person name="Smeekens S."/>
            <person name="Rottier P.J.M."/>
            <person name="Warren G."/>
        </authorList>
    </citation>
    <scope>NUCLEOTIDE SEQUENCE [GENOMIC RNA]</scope>
</reference>
<reference key="2">
    <citation type="journal article" date="1984" name="Adv. Exp. Med. Biol.">
        <title>Cloning and sequencing the nucleocapsid and E1 genes of coronavirus.</title>
        <authorList>
            <person name="Armstrong J."/>
            <person name="Smeekens S."/>
            <person name="Spaan W.J.M."/>
            <person name="Rottier P.J.M."/>
            <person name="van der Zeijst B.A.M."/>
        </authorList>
    </citation>
    <scope>NUCLEOTIDE SEQUENCE [GENOMIC RNA]</scope>
</reference>
<reference key="3">
    <citation type="journal article" date="1997" name="Virology">
        <title>Altered pathogenesis of a mutant of the murine coronavirus MHV-A59 is associated with a Q159L amino acid substitution in the spike protein.</title>
        <authorList>
            <person name="Leparc-Goffart I."/>
            <person name="Hingley S.T."/>
            <person name="Chua M.M."/>
            <person name="Jiang X."/>
            <person name="Lavi E."/>
            <person name="Weiss S.R."/>
        </authorList>
    </citation>
    <scope>NUCLEOTIDE SEQUENCE [GENOMIC RNA]</scope>
    <source>
        <strain>Isolate C12 mutant</strain>
    </source>
</reference>
<reference key="4">
    <citation type="journal article" date="1992" name="J. Biol. Chem.">
        <title>Membrane assembly of the triple-spanning coronavirus M protein. Individual transmembrane domains show preferred orientation.</title>
        <authorList>
            <person name="Locker J.K."/>
            <person name="Rose J.K."/>
            <person name="Horzinek M.C."/>
            <person name="Rottier P.J.M."/>
        </authorList>
    </citation>
    <scope>TOPOLOGY</scope>
</reference>
<reference key="5">
    <citation type="journal article" date="1999" name="J. Virol.">
        <title>Mapping of the coronavirus membrane protein domains involved in interaction with the spike protein.</title>
        <authorList>
            <person name="de Haan C.A.M."/>
            <person name="Smeets M."/>
            <person name="Vernooij F."/>
            <person name="Vennema H."/>
            <person name="Rottier P.J.M."/>
        </authorList>
    </citation>
    <scope>INTERACTION WITH S</scope>
    <scope>MUTAGENESIS OF TYR-211</scope>
</reference>
<reference key="6">
    <citation type="journal article" date="2000" name="J. Virol.">
        <title>Assembly of the coronavirus envelope: homotypic interactions between the M proteins.</title>
        <authorList>
            <person name="de Haan C.A.M."/>
            <person name="Vennema H."/>
            <person name="Rottier P.J.M."/>
        </authorList>
    </citation>
    <scope>HOMOTYPIC INTERACTION</scope>
    <scope>MUTAGENESIS OF 2-SER-SER-3 AND 225-LEU-LEU-226</scope>
</reference>
<reference key="7">
    <citation type="journal article" date="1992" name="J. Biol. Chem.">
        <title>O-glycosylation of the coronavirus M protein. Differential localization of sialyltransferases in N- and O-linked glycosylation.</title>
        <authorList>
            <person name="Locker J.K."/>
            <person name="Griffiths G."/>
            <person name="Horzinek M.C."/>
            <person name="Rottier P.J.M."/>
        </authorList>
    </citation>
    <scope>STRUCTURE OF CARBOHYDRATES</scope>
</reference>
<organism>
    <name type="scientific">Murine coronavirus (strain A59)</name>
    <name type="common">MHV-A59</name>
    <name type="synonym">Murine hepatitis virus</name>
    <dbReference type="NCBI Taxonomy" id="11142"/>
    <lineage>
        <taxon>Viruses</taxon>
        <taxon>Riboviria</taxon>
        <taxon>Orthornavirae</taxon>
        <taxon>Pisuviricota</taxon>
        <taxon>Pisoniviricetes</taxon>
        <taxon>Nidovirales</taxon>
        <taxon>Cornidovirineae</taxon>
        <taxon>Coronaviridae</taxon>
        <taxon>Orthocoronavirinae</taxon>
        <taxon>Betacoronavirus</taxon>
        <taxon>Embecovirus</taxon>
        <taxon>Murine coronavirus</taxon>
    </lineage>
</organism>
<organismHost>
    <name type="scientific">Mus musculus</name>
    <name type="common">Mouse</name>
    <dbReference type="NCBI Taxonomy" id="10090"/>
</organismHost>
<evidence type="ECO:0000255" key="1">
    <source>
        <dbReference type="HAMAP-Rule" id="MF_04202"/>
    </source>
</evidence>
<evidence type="ECO:0000255" key="2">
    <source>
        <dbReference type="PROSITE-ProRule" id="PRU01275"/>
    </source>
</evidence>
<evidence type="ECO:0000269" key="3">
    <source>
    </source>
</evidence>
<evidence type="ECO:0000269" key="4">
    <source>
    </source>
</evidence>
<gene>
    <name evidence="1" type="primary">M</name>
    <name type="ORF">6</name>
</gene>